<gene>
    <name evidence="1" type="primary">groES</name>
    <name evidence="1" type="synonym">groS</name>
</gene>
<name>CH10_VIBHA</name>
<feature type="chain" id="PRO_0000174893" description="Co-chaperonin GroES">
    <location>
        <begin position="1"/>
        <end position="102"/>
    </location>
</feature>
<accession>Q83WI9</accession>
<sequence length="102" mass="10875">MNIRPLHDRVIVERKEVESKSAGGIVLTGSAAEKSTRGVVLAVGKGRILENGTVLPLDVKVGDTVIFAEGYGTKTEKIDGKEVLVMSENDIMAIVDLIAIVE</sequence>
<evidence type="ECO:0000255" key="1">
    <source>
        <dbReference type="HAMAP-Rule" id="MF_00580"/>
    </source>
</evidence>
<evidence type="ECO:0000305" key="2"/>
<reference key="1">
    <citation type="journal article" date="2003" name="Microbiology">
        <title>Cloning and characterization of the groE heat-shock operon of the marine bacterium Vibrio harveyi.</title>
        <authorList>
            <person name="Kuchanny-Ardigo D."/>
            <person name="Lipinska B."/>
        </authorList>
    </citation>
    <scope>NUCLEOTIDE SEQUENCE [GENOMIC DNA]</scope>
</reference>
<keyword id="KW-0143">Chaperone</keyword>
<keyword id="KW-0963">Cytoplasm</keyword>
<proteinExistence type="inferred from homology"/>
<dbReference type="EMBL" id="AY246431">
    <property type="protein sequence ID" value="AAO88904.1"/>
    <property type="molecule type" value="Genomic_DNA"/>
</dbReference>
<dbReference type="SMR" id="Q83WI9"/>
<dbReference type="STRING" id="669.AL538_08345"/>
<dbReference type="GO" id="GO:0005737">
    <property type="term" value="C:cytoplasm"/>
    <property type="evidence" value="ECO:0007669"/>
    <property type="project" value="UniProtKB-SubCell"/>
</dbReference>
<dbReference type="GO" id="GO:0005524">
    <property type="term" value="F:ATP binding"/>
    <property type="evidence" value="ECO:0007669"/>
    <property type="project" value="InterPro"/>
</dbReference>
<dbReference type="GO" id="GO:0046872">
    <property type="term" value="F:metal ion binding"/>
    <property type="evidence" value="ECO:0007669"/>
    <property type="project" value="TreeGrafter"/>
</dbReference>
<dbReference type="GO" id="GO:0044183">
    <property type="term" value="F:protein folding chaperone"/>
    <property type="evidence" value="ECO:0007669"/>
    <property type="project" value="InterPro"/>
</dbReference>
<dbReference type="GO" id="GO:0051087">
    <property type="term" value="F:protein-folding chaperone binding"/>
    <property type="evidence" value="ECO:0007669"/>
    <property type="project" value="TreeGrafter"/>
</dbReference>
<dbReference type="GO" id="GO:0051082">
    <property type="term" value="F:unfolded protein binding"/>
    <property type="evidence" value="ECO:0007669"/>
    <property type="project" value="TreeGrafter"/>
</dbReference>
<dbReference type="GO" id="GO:0051085">
    <property type="term" value="P:chaperone cofactor-dependent protein refolding"/>
    <property type="evidence" value="ECO:0007669"/>
    <property type="project" value="TreeGrafter"/>
</dbReference>
<dbReference type="CDD" id="cd00320">
    <property type="entry name" value="cpn10"/>
    <property type="match status" value="1"/>
</dbReference>
<dbReference type="FunFam" id="2.30.33.40:FF:000001">
    <property type="entry name" value="10 kDa chaperonin"/>
    <property type="match status" value="1"/>
</dbReference>
<dbReference type="Gene3D" id="2.30.33.40">
    <property type="entry name" value="GroES chaperonin"/>
    <property type="match status" value="1"/>
</dbReference>
<dbReference type="HAMAP" id="MF_00580">
    <property type="entry name" value="CH10"/>
    <property type="match status" value="1"/>
</dbReference>
<dbReference type="InterPro" id="IPR020818">
    <property type="entry name" value="Chaperonin_GroES"/>
</dbReference>
<dbReference type="InterPro" id="IPR037124">
    <property type="entry name" value="Chaperonin_GroES_sf"/>
</dbReference>
<dbReference type="InterPro" id="IPR018369">
    <property type="entry name" value="Chaprnonin_Cpn10_CS"/>
</dbReference>
<dbReference type="InterPro" id="IPR011032">
    <property type="entry name" value="GroES-like_sf"/>
</dbReference>
<dbReference type="NCBIfam" id="NF001526">
    <property type="entry name" value="PRK00364.1-1"/>
    <property type="match status" value="1"/>
</dbReference>
<dbReference type="NCBIfam" id="NF001527">
    <property type="entry name" value="PRK00364.1-2"/>
    <property type="match status" value="1"/>
</dbReference>
<dbReference type="NCBIfam" id="NF001531">
    <property type="entry name" value="PRK00364.2-2"/>
    <property type="match status" value="1"/>
</dbReference>
<dbReference type="PANTHER" id="PTHR10772">
    <property type="entry name" value="10 KDA HEAT SHOCK PROTEIN"/>
    <property type="match status" value="1"/>
</dbReference>
<dbReference type="PANTHER" id="PTHR10772:SF58">
    <property type="entry name" value="CO-CHAPERONIN GROES"/>
    <property type="match status" value="1"/>
</dbReference>
<dbReference type="Pfam" id="PF00166">
    <property type="entry name" value="Cpn10"/>
    <property type="match status" value="1"/>
</dbReference>
<dbReference type="PRINTS" id="PR00297">
    <property type="entry name" value="CHAPERONIN10"/>
</dbReference>
<dbReference type="SMART" id="SM00883">
    <property type="entry name" value="Cpn10"/>
    <property type="match status" value="1"/>
</dbReference>
<dbReference type="SUPFAM" id="SSF50129">
    <property type="entry name" value="GroES-like"/>
    <property type="match status" value="1"/>
</dbReference>
<dbReference type="PROSITE" id="PS00681">
    <property type="entry name" value="CHAPERONINS_CPN10"/>
    <property type="match status" value="1"/>
</dbReference>
<comment type="function">
    <text evidence="1">Together with the chaperonin GroEL, plays an essential role in assisting protein folding. The GroEL-GroES system forms a nano-cage that allows encapsulation of the non-native substrate proteins and provides a physical environment optimized to promote and accelerate protein folding. GroES binds to the apical surface of the GroEL ring, thereby capping the opening of the GroEL channel.</text>
</comment>
<comment type="subunit">
    <text evidence="1">Heptamer of 7 subunits arranged in a ring. Interacts with the chaperonin GroEL.</text>
</comment>
<comment type="subcellular location">
    <subcellularLocation>
        <location evidence="1">Cytoplasm</location>
    </subcellularLocation>
</comment>
<comment type="similarity">
    <text evidence="1 2">Belongs to the GroES chaperonin family.</text>
</comment>
<organism>
    <name type="scientific">Vibrio harveyi</name>
    <name type="common">Beneckea harveyi</name>
    <dbReference type="NCBI Taxonomy" id="669"/>
    <lineage>
        <taxon>Bacteria</taxon>
        <taxon>Pseudomonadati</taxon>
        <taxon>Pseudomonadota</taxon>
        <taxon>Gammaproteobacteria</taxon>
        <taxon>Vibrionales</taxon>
        <taxon>Vibrionaceae</taxon>
        <taxon>Vibrio</taxon>
    </lineage>
</organism>
<protein>
    <recommendedName>
        <fullName evidence="1">Co-chaperonin GroES</fullName>
    </recommendedName>
    <alternativeName>
        <fullName evidence="1">10 kDa chaperonin</fullName>
    </alternativeName>
    <alternativeName>
        <fullName evidence="1">Chaperonin-10</fullName>
        <shortName evidence="1">Cpn10</shortName>
    </alternativeName>
</protein>